<keyword id="KW-0479">Metal-binding</keyword>
<keyword id="KW-1185">Reference proteome</keyword>
<keyword id="KW-0687">Ribonucleoprotein</keyword>
<keyword id="KW-0689">Ribosomal protein</keyword>
<keyword id="KW-0694">RNA-binding</keyword>
<keyword id="KW-0699">rRNA-binding</keyword>
<keyword id="KW-0862">Zinc</keyword>
<keyword id="KW-0863">Zinc-finger</keyword>
<feature type="chain" id="PRO_0000149148" description="Large ribosomal subunit protein eL42">
    <location>
        <begin position="1"/>
        <end position="95"/>
    </location>
</feature>
<feature type="zinc finger region" description="C4-type" evidence="1">
    <location>
        <begin position="11"/>
        <end position="74"/>
    </location>
</feature>
<feature type="binding site" evidence="1">
    <location>
        <position position="11"/>
    </location>
    <ligand>
        <name>Zn(2+)</name>
        <dbReference type="ChEBI" id="CHEBI:29105"/>
    </ligand>
</feature>
<feature type="binding site" evidence="1">
    <location>
        <position position="14"/>
    </location>
    <ligand>
        <name>Zn(2+)</name>
        <dbReference type="ChEBI" id="CHEBI:29105"/>
    </ligand>
</feature>
<feature type="binding site" evidence="1">
    <location>
        <position position="71"/>
    </location>
    <ligand>
        <name>Zn(2+)</name>
        <dbReference type="ChEBI" id="CHEBI:29105"/>
    </ligand>
</feature>
<feature type="binding site" evidence="1">
    <location>
        <position position="74"/>
    </location>
    <ligand>
        <name>Zn(2+)</name>
        <dbReference type="ChEBI" id="CHEBI:29105"/>
    </ligand>
</feature>
<dbReference type="EMBL" id="BA000002">
    <property type="protein sequence ID" value="BAA79396.2"/>
    <property type="molecule type" value="Genomic_DNA"/>
</dbReference>
<dbReference type="PIR" id="H72737">
    <property type="entry name" value="H72737"/>
</dbReference>
<dbReference type="SMR" id="Q9YF00"/>
<dbReference type="STRING" id="272557.APE_0436b.1"/>
<dbReference type="EnsemblBacteria" id="BAA79396">
    <property type="protein sequence ID" value="BAA79396"/>
    <property type="gene ID" value="APE_0436b.1"/>
</dbReference>
<dbReference type="KEGG" id="ape:APE_0436b.1"/>
<dbReference type="PATRIC" id="fig|272557.25.peg.327"/>
<dbReference type="eggNOG" id="arCOG04109">
    <property type="taxonomic scope" value="Archaea"/>
</dbReference>
<dbReference type="Proteomes" id="UP000002518">
    <property type="component" value="Chromosome"/>
</dbReference>
<dbReference type="GO" id="GO:1990904">
    <property type="term" value="C:ribonucleoprotein complex"/>
    <property type="evidence" value="ECO:0007669"/>
    <property type="project" value="UniProtKB-KW"/>
</dbReference>
<dbReference type="GO" id="GO:0005840">
    <property type="term" value="C:ribosome"/>
    <property type="evidence" value="ECO:0007669"/>
    <property type="project" value="UniProtKB-KW"/>
</dbReference>
<dbReference type="GO" id="GO:0070180">
    <property type="term" value="F:large ribosomal subunit rRNA binding"/>
    <property type="evidence" value="ECO:0007669"/>
    <property type="project" value="UniProtKB-UniRule"/>
</dbReference>
<dbReference type="GO" id="GO:0003735">
    <property type="term" value="F:structural constituent of ribosome"/>
    <property type="evidence" value="ECO:0007669"/>
    <property type="project" value="InterPro"/>
</dbReference>
<dbReference type="GO" id="GO:0008270">
    <property type="term" value="F:zinc ion binding"/>
    <property type="evidence" value="ECO:0007669"/>
    <property type="project" value="UniProtKB-UniRule"/>
</dbReference>
<dbReference type="GO" id="GO:0006412">
    <property type="term" value="P:translation"/>
    <property type="evidence" value="ECO:0007669"/>
    <property type="project" value="UniProtKB-UniRule"/>
</dbReference>
<dbReference type="FunFam" id="3.10.450.80:FF:000001">
    <property type="entry name" value="60S ribosomal protein L44"/>
    <property type="match status" value="1"/>
</dbReference>
<dbReference type="Gene3D" id="3.10.450.80">
    <property type="match status" value="1"/>
</dbReference>
<dbReference type="HAMAP" id="MF_01476">
    <property type="entry name" value="Ribosomal_L44e"/>
    <property type="match status" value="1"/>
</dbReference>
<dbReference type="InterPro" id="IPR000552">
    <property type="entry name" value="Ribosomal_eL44"/>
</dbReference>
<dbReference type="InterPro" id="IPR053708">
    <property type="entry name" value="Ribosomal_LSU_eL42"/>
</dbReference>
<dbReference type="InterPro" id="IPR011332">
    <property type="entry name" value="Ribosomal_zn-bd"/>
</dbReference>
<dbReference type="NCBIfam" id="NF004425">
    <property type="entry name" value="PRK05767.1"/>
    <property type="match status" value="1"/>
</dbReference>
<dbReference type="PANTHER" id="PTHR10369">
    <property type="entry name" value="60S RIBOSOMAL PROTEIN L36A/L44"/>
    <property type="match status" value="1"/>
</dbReference>
<dbReference type="Pfam" id="PF00935">
    <property type="entry name" value="Ribosomal_L44"/>
    <property type="match status" value="1"/>
</dbReference>
<dbReference type="SUPFAM" id="SSF57829">
    <property type="entry name" value="Zn-binding ribosomal proteins"/>
    <property type="match status" value="1"/>
</dbReference>
<reference key="1">
    <citation type="journal article" date="1999" name="DNA Res.">
        <title>Complete genome sequence of an aerobic hyper-thermophilic crenarchaeon, Aeropyrum pernix K1.</title>
        <authorList>
            <person name="Kawarabayasi Y."/>
            <person name="Hino Y."/>
            <person name="Horikawa H."/>
            <person name="Yamazaki S."/>
            <person name="Haikawa Y."/>
            <person name="Jin-no K."/>
            <person name="Takahashi M."/>
            <person name="Sekine M."/>
            <person name="Baba S."/>
            <person name="Ankai A."/>
            <person name="Kosugi H."/>
            <person name="Hosoyama A."/>
            <person name="Fukui S."/>
            <person name="Nagai Y."/>
            <person name="Nishijima K."/>
            <person name="Nakazawa H."/>
            <person name="Takamiya M."/>
            <person name="Masuda S."/>
            <person name="Funahashi T."/>
            <person name="Tanaka T."/>
            <person name="Kudoh Y."/>
            <person name="Yamazaki J."/>
            <person name="Kushida N."/>
            <person name="Oguchi A."/>
            <person name="Aoki K."/>
            <person name="Kubota K."/>
            <person name="Nakamura Y."/>
            <person name="Nomura N."/>
            <person name="Sako Y."/>
            <person name="Kikuchi H."/>
        </authorList>
    </citation>
    <scope>NUCLEOTIDE SEQUENCE [LARGE SCALE GENOMIC DNA]</scope>
    <source>
        <strain>ATCC 700893 / DSM 11879 / JCM 9820 / NBRC 100138 / K1</strain>
    </source>
</reference>
<gene>
    <name evidence="1" type="primary">rpl44e</name>
    <name type="ordered locus">APE_0436b.1</name>
    <name type="ORF">APES016</name>
</gene>
<comment type="function">
    <text evidence="1">Binds to the 23S rRNA.</text>
</comment>
<comment type="cofactor">
    <cofactor evidence="1">
        <name>Zn(2+)</name>
        <dbReference type="ChEBI" id="CHEBI:29105"/>
    </cofactor>
    <text evidence="1">Binds 1 zinc ion per subunit.</text>
</comment>
<comment type="subunit">
    <text evidence="1">Part of the 50S ribosomal subunit.</text>
</comment>
<comment type="similarity">
    <text evidence="1">Belongs to the eukaryotic ribosomal protein eL42 family.</text>
</comment>
<accession>Q9YF00</accession>
<sequence>MKFPKRIRTYCPRCNTHTEHRVAQYRAGKRRAMALGERRYRRKQEGYGSQRRPEQKRFAKVTKKQVLVITCTVCGRKRPFLGIRLKRLELVDVVR</sequence>
<organism>
    <name type="scientific">Aeropyrum pernix (strain ATCC 700893 / DSM 11879 / JCM 9820 / NBRC 100138 / K1)</name>
    <dbReference type="NCBI Taxonomy" id="272557"/>
    <lineage>
        <taxon>Archaea</taxon>
        <taxon>Thermoproteota</taxon>
        <taxon>Thermoprotei</taxon>
        <taxon>Desulfurococcales</taxon>
        <taxon>Desulfurococcaceae</taxon>
        <taxon>Aeropyrum</taxon>
    </lineage>
</organism>
<name>RL44E_AERPE</name>
<protein>
    <recommendedName>
        <fullName evidence="1">Large ribosomal subunit protein eL42</fullName>
    </recommendedName>
    <alternativeName>
        <fullName evidence="2">50S ribosomal protein L44e</fullName>
    </alternativeName>
</protein>
<evidence type="ECO:0000255" key="1">
    <source>
        <dbReference type="HAMAP-Rule" id="MF_01476"/>
    </source>
</evidence>
<evidence type="ECO:0000305" key="2"/>
<proteinExistence type="inferred from homology"/>